<feature type="chain" id="PRO_0000250022" description="Anhydro-N-acetylmuramic acid kinase">
    <location>
        <begin position="1"/>
        <end position="375"/>
    </location>
</feature>
<feature type="binding site" evidence="1">
    <location>
        <begin position="12"/>
        <end position="19"/>
    </location>
    <ligand>
        <name>ATP</name>
        <dbReference type="ChEBI" id="CHEBI:30616"/>
    </ligand>
</feature>
<proteinExistence type="inferred from homology"/>
<gene>
    <name evidence="1" type="primary">anmK</name>
    <name type="ordered locus">PBPRA1725</name>
</gene>
<comment type="function">
    <text evidence="1">Catalyzes the specific phosphorylation of 1,6-anhydro-N-acetylmuramic acid (anhMurNAc) with the simultaneous cleavage of the 1,6-anhydro ring, generating MurNAc-6-P. Is required for the utilization of anhMurNAc either imported from the medium or derived from its own cell wall murein, and thus plays a role in cell wall recycling.</text>
</comment>
<comment type="catalytic activity">
    <reaction evidence="1">
        <text>1,6-anhydro-N-acetyl-beta-muramate + ATP + H2O = N-acetyl-D-muramate 6-phosphate + ADP + H(+)</text>
        <dbReference type="Rhea" id="RHEA:24952"/>
        <dbReference type="ChEBI" id="CHEBI:15377"/>
        <dbReference type="ChEBI" id="CHEBI:15378"/>
        <dbReference type="ChEBI" id="CHEBI:30616"/>
        <dbReference type="ChEBI" id="CHEBI:58690"/>
        <dbReference type="ChEBI" id="CHEBI:58722"/>
        <dbReference type="ChEBI" id="CHEBI:456216"/>
        <dbReference type="EC" id="2.7.1.170"/>
    </reaction>
</comment>
<comment type="pathway">
    <text evidence="1">Amino-sugar metabolism; 1,6-anhydro-N-acetylmuramate degradation.</text>
</comment>
<comment type="pathway">
    <text evidence="1">Cell wall biogenesis; peptidoglycan recycling.</text>
</comment>
<comment type="similarity">
    <text evidence="1">Belongs to the anhydro-N-acetylmuramic acid kinase family.</text>
</comment>
<comment type="sequence caution" evidence="2">
    <conflict type="erroneous initiation">
        <sequence resource="EMBL-CDS" id="CAG20132"/>
    </conflict>
</comment>
<keyword id="KW-0067">ATP-binding</keyword>
<keyword id="KW-0119">Carbohydrate metabolism</keyword>
<keyword id="KW-0418">Kinase</keyword>
<keyword id="KW-0547">Nucleotide-binding</keyword>
<keyword id="KW-1185">Reference proteome</keyword>
<keyword id="KW-0808">Transferase</keyword>
<reference key="1">
    <citation type="journal article" date="2005" name="Science">
        <title>Life at depth: Photobacterium profundum genome sequence and expression analysis.</title>
        <authorList>
            <person name="Vezzi A."/>
            <person name="Campanaro S."/>
            <person name="D'Angelo M."/>
            <person name="Simonato F."/>
            <person name="Vitulo N."/>
            <person name="Lauro F.M."/>
            <person name="Cestaro A."/>
            <person name="Malacrida G."/>
            <person name="Simionati B."/>
            <person name="Cannata N."/>
            <person name="Romualdi C."/>
            <person name="Bartlett D.H."/>
            <person name="Valle G."/>
        </authorList>
    </citation>
    <scope>NUCLEOTIDE SEQUENCE [LARGE SCALE GENOMIC DNA]</scope>
    <source>
        <strain>ATCC BAA-1253 / SS9</strain>
    </source>
</reference>
<organism>
    <name type="scientific">Photobacterium profundum (strain SS9)</name>
    <dbReference type="NCBI Taxonomy" id="298386"/>
    <lineage>
        <taxon>Bacteria</taxon>
        <taxon>Pseudomonadati</taxon>
        <taxon>Pseudomonadota</taxon>
        <taxon>Gammaproteobacteria</taxon>
        <taxon>Vibrionales</taxon>
        <taxon>Vibrionaceae</taxon>
        <taxon>Photobacterium</taxon>
    </lineage>
</organism>
<dbReference type="EC" id="2.7.1.170" evidence="1"/>
<dbReference type="EMBL" id="CR378668">
    <property type="protein sequence ID" value="CAG20132.1"/>
    <property type="status" value="ALT_INIT"/>
    <property type="molecule type" value="Genomic_DNA"/>
</dbReference>
<dbReference type="RefSeq" id="WP_041394218.1">
    <property type="nucleotide sequence ID" value="NC_006370.1"/>
</dbReference>
<dbReference type="SMR" id="Q6LRE4"/>
<dbReference type="STRING" id="298386.PBPRA1725"/>
<dbReference type="KEGG" id="ppr:PBPRA1725"/>
<dbReference type="eggNOG" id="COG2377">
    <property type="taxonomic scope" value="Bacteria"/>
</dbReference>
<dbReference type="HOGENOM" id="CLU_038782_0_0_6"/>
<dbReference type="UniPathway" id="UPA00343"/>
<dbReference type="UniPathway" id="UPA00544"/>
<dbReference type="Proteomes" id="UP000000593">
    <property type="component" value="Chromosome 1"/>
</dbReference>
<dbReference type="GO" id="GO:0005524">
    <property type="term" value="F:ATP binding"/>
    <property type="evidence" value="ECO:0007669"/>
    <property type="project" value="UniProtKB-UniRule"/>
</dbReference>
<dbReference type="GO" id="GO:0016301">
    <property type="term" value="F:kinase activity"/>
    <property type="evidence" value="ECO:0007669"/>
    <property type="project" value="UniProtKB-KW"/>
</dbReference>
<dbReference type="GO" id="GO:0016773">
    <property type="term" value="F:phosphotransferase activity, alcohol group as acceptor"/>
    <property type="evidence" value="ECO:0007669"/>
    <property type="project" value="UniProtKB-UniRule"/>
</dbReference>
<dbReference type="GO" id="GO:0097175">
    <property type="term" value="P:1,6-anhydro-N-acetyl-beta-muramic acid catabolic process"/>
    <property type="evidence" value="ECO:0007669"/>
    <property type="project" value="UniProtKB-UniRule"/>
</dbReference>
<dbReference type="GO" id="GO:0006040">
    <property type="term" value="P:amino sugar metabolic process"/>
    <property type="evidence" value="ECO:0007669"/>
    <property type="project" value="InterPro"/>
</dbReference>
<dbReference type="GO" id="GO:0009254">
    <property type="term" value="P:peptidoglycan turnover"/>
    <property type="evidence" value="ECO:0007669"/>
    <property type="project" value="UniProtKB-UniRule"/>
</dbReference>
<dbReference type="CDD" id="cd24050">
    <property type="entry name" value="ASKHA_NBD_ANMK"/>
    <property type="match status" value="1"/>
</dbReference>
<dbReference type="Gene3D" id="3.30.420.40">
    <property type="match status" value="2"/>
</dbReference>
<dbReference type="HAMAP" id="MF_01270">
    <property type="entry name" value="AnhMurNAc_kinase"/>
    <property type="match status" value="1"/>
</dbReference>
<dbReference type="InterPro" id="IPR005338">
    <property type="entry name" value="Anhydro_N_Ac-Mur_kinase"/>
</dbReference>
<dbReference type="InterPro" id="IPR043129">
    <property type="entry name" value="ATPase_NBD"/>
</dbReference>
<dbReference type="NCBIfam" id="NF007139">
    <property type="entry name" value="PRK09585.1-3"/>
    <property type="match status" value="1"/>
</dbReference>
<dbReference type="NCBIfam" id="NF007148">
    <property type="entry name" value="PRK09585.3-2"/>
    <property type="match status" value="1"/>
</dbReference>
<dbReference type="PANTHER" id="PTHR30605">
    <property type="entry name" value="ANHYDRO-N-ACETYLMURAMIC ACID KINASE"/>
    <property type="match status" value="1"/>
</dbReference>
<dbReference type="PANTHER" id="PTHR30605:SF0">
    <property type="entry name" value="ANHYDRO-N-ACETYLMURAMIC ACID KINASE"/>
    <property type="match status" value="1"/>
</dbReference>
<dbReference type="Pfam" id="PF03702">
    <property type="entry name" value="AnmK"/>
    <property type="match status" value="1"/>
</dbReference>
<dbReference type="SUPFAM" id="SSF53067">
    <property type="entry name" value="Actin-like ATPase domain"/>
    <property type="match status" value="1"/>
</dbReference>
<evidence type="ECO:0000255" key="1">
    <source>
        <dbReference type="HAMAP-Rule" id="MF_01270"/>
    </source>
</evidence>
<evidence type="ECO:0000305" key="2"/>
<name>ANMK_PHOPR</name>
<accession>Q6LRE4</accession>
<protein>
    <recommendedName>
        <fullName evidence="1">Anhydro-N-acetylmuramic acid kinase</fullName>
        <ecNumber evidence="1">2.7.1.170</ecNumber>
    </recommendedName>
    <alternativeName>
        <fullName evidence="1">AnhMurNAc kinase</fullName>
    </alternativeName>
</protein>
<sequence>MAIERYIGIMSGTSMDGVDTVLVEIEENSIRLMGENSFPMGEDLKQALLDICLGQSTNLQAVGELDHRLGHLFADAVIALLENTGISPDSITAIGSHGQTVFHSPETQYAFTMQLGDANIIAAKTHITTIADFRRKDMALGGQGAPLVPAFHQQLFSSLDTTRVILNIGGIANITVLTPNQPVTGYDTGPGNMLMDAWIHQHNGSQYDVNAKWAKTGTVNEILLERLLDEPYFKQPAPKSTGRELFNLPWLKQKLSGLDIPAEDVQATLAEFTAVTITNDVITYQHNERSELSTKQELLVCGGGAHNPLLMARLAAQLPKWQVMTTTERGVDSDNMEAMAFAWLAYRTHHNMPGNLPEVTGASGLTSLGAIYPAS</sequence>